<organism>
    <name type="scientific">Streptococcus pneumoniae (strain P1031)</name>
    <dbReference type="NCBI Taxonomy" id="488223"/>
    <lineage>
        <taxon>Bacteria</taxon>
        <taxon>Bacillati</taxon>
        <taxon>Bacillota</taxon>
        <taxon>Bacilli</taxon>
        <taxon>Lactobacillales</taxon>
        <taxon>Streptococcaceae</taxon>
        <taxon>Streptococcus</taxon>
    </lineage>
</organism>
<keyword id="KW-0378">Hydrolase</keyword>
<keyword id="KW-0511">Multifunctional enzyme</keyword>
<keyword id="KW-0658">Purine biosynthesis</keyword>
<keyword id="KW-0808">Transferase</keyword>
<comment type="catalytic activity">
    <reaction evidence="1">
        <text>(6R)-10-formyltetrahydrofolate + 5-amino-1-(5-phospho-beta-D-ribosyl)imidazole-4-carboxamide = 5-formamido-1-(5-phospho-D-ribosyl)imidazole-4-carboxamide + (6S)-5,6,7,8-tetrahydrofolate</text>
        <dbReference type="Rhea" id="RHEA:22192"/>
        <dbReference type="ChEBI" id="CHEBI:57453"/>
        <dbReference type="ChEBI" id="CHEBI:58467"/>
        <dbReference type="ChEBI" id="CHEBI:58475"/>
        <dbReference type="ChEBI" id="CHEBI:195366"/>
        <dbReference type="EC" id="2.1.2.3"/>
    </reaction>
</comment>
<comment type="catalytic activity">
    <reaction evidence="1">
        <text>IMP + H2O = 5-formamido-1-(5-phospho-D-ribosyl)imidazole-4-carboxamide</text>
        <dbReference type="Rhea" id="RHEA:18445"/>
        <dbReference type="ChEBI" id="CHEBI:15377"/>
        <dbReference type="ChEBI" id="CHEBI:58053"/>
        <dbReference type="ChEBI" id="CHEBI:58467"/>
        <dbReference type="EC" id="3.5.4.10"/>
    </reaction>
</comment>
<comment type="pathway">
    <text evidence="1">Purine metabolism; IMP biosynthesis via de novo pathway; 5-formamido-1-(5-phospho-D-ribosyl)imidazole-4-carboxamide from 5-amino-1-(5-phospho-D-ribosyl)imidazole-4-carboxamide (10-formyl THF route): step 1/1.</text>
</comment>
<comment type="pathway">
    <text evidence="1">Purine metabolism; IMP biosynthesis via de novo pathway; IMP from 5-formamido-1-(5-phospho-D-ribosyl)imidazole-4-carboxamide: step 1/1.</text>
</comment>
<comment type="domain">
    <text evidence="1">The IMP cyclohydrolase activity resides in the N-terminal region.</text>
</comment>
<comment type="similarity">
    <text evidence="1">Belongs to the PurH family.</text>
</comment>
<protein>
    <recommendedName>
        <fullName evidence="1">Bifunctional purine biosynthesis protein PurH</fullName>
    </recommendedName>
    <domain>
        <recommendedName>
            <fullName evidence="1">Phosphoribosylaminoimidazolecarboxamide formyltransferase</fullName>
            <ecNumber evidence="1">2.1.2.3</ecNumber>
        </recommendedName>
        <alternativeName>
            <fullName evidence="1">AICAR transformylase</fullName>
        </alternativeName>
    </domain>
    <domain>
        <recommendedName>
            <fullName evidence="1">IMP cyclohydrolase</fullName>
            <ecNumber evidence="1">3.5.4.10</ecNumber>
        </recommendedName>
        <alternativeName>
            <fullName evidence="1">ATIC</fullName>
        </alternativeName>
        <alternativeName>
            <fullName evidence="1">IMP synthase</fullName>
        </alternativeName>
        <alternativeName>
            <fullName evidence="1">Inosinicase</fullName>
        </alternativeName>
    </domain>
</protein>
<accession>C1CHW2</accession>
<feature type="chain" id="PRO_1000122977" description="Bifunctional purine biosynthesis protein PurH">
    <location>
        <begin position="1"/>
        <end position="515"/>
    </location>
</feature>
<feature type="domain" description="MGS-like" evidence="2">
    <location>
        <begin position="1"/>
        <end position="145"/>
    </location>
</feature>
<gene>
    <name evidence="1" type="primary">purH</name>
    <name type="ordered locus">SPP_0115</name>
</gene>
<sequence>MTKRVLISVSDKAGIVEFAQELKKLGWEIISTGGTKVALDNAGVDTIAIDDVTGFPEMMDGRVKTLHPNIHGGLLARRDLDSHLEAAKDNKIELIDLVVVNLYPFKETILKPDVTYADAVENIDIGGPSMLRSAAKNHASVTVVVDPADYAVVLDELAANGETSYETRQRLAAKVFRHTAAYDALIAKYFTAQVGESKPEKLTLTYDLKQPMRYGENPQQDADFYQKALPTDYSIASAKQLNGKELSFNNIRDADAAIRIIRDFKDSPTVVALKHMNPCGIGQADDIETAWEYAYESDPVSIFGGIVVLNREVDAATAEKMHGVFLEIIIAPSYTDEALAILINKKKNLRILALPFNAQEASEVEAEYTGVVGGLLVQNQDVVKESPADWQVVTKRQPTETEATALEFAWKAIKYVKSNGIIVTNDHMTLGVGPGQTNRVASVRLAIDQAKDRLDGAVLASDAFFPFADNVEEIAKAGIKAIIQPGGSVRDQESIEAADKYGLTMVFTGVRHFRH</sequence>
<name>PUR9_STRZP</name>
<proteinExistence type="inferred from homology"/>
<reference key="1">
    <citation type="journal article" date="2010" name="Genome Biol.">
        <title>Structure and dynamics of the pan-genome of Streptococcus pneumoniae and closely related species.</title>
        <authorList>
            <person name="Donati C."/>
            <person name="Hiller N.L."/>
            <person name="Tettelin H."/>
            <person name="Muzzi A."/>
            <person name="Croucher N.J."/>
            <person name="Angiuoli S.V."/>
            <person name="Oggioni M."/>
            <person name="Dunning Hotopp J.C."/>
            <person name="Hu F.Z."/>
            <person name="Riley D.R."/>
            <person name="Covacci A."/>
            <person name="Mitchell T.J."/>
            <person name="Bentley S.D."/>
            <person name="Kilian M."/>
            <person name="Ehrlich G.D."/>
            <person name="Rappuoli R."/>
            <person name="Moxon E.R."/>
            <person name="Masignani V."/>
        </authorList>
    </citation>
    <scope>NUCLEOTIDE SEQUENCE [LARGE SCALE GENOMIC DNA]</scope>
    <source>
        <strain>P1031</strain>
    </source>
</reference>
<evidence type="ECO:0000255" key="1">
    <source>
        <dbReference type="HAMAP-Rule" id="MF_00139"/>
    </source>
</evidence>
<evidence type="ECO:0000255" key="2">
    <source>
        <dbReference type="PROSITE-ProRule" id="PRU01202"/>
    </source>
</evidence>
<dbReference type="EC" id="2.1.2.3" evidence="1"/>
<dbReference type="EC" id="3.5.4.10" evidence="1"/>
<dbReference type="EMBL" id="CP000920">
    <property type="protein sequence ID" value="ACO20149.1"/>
    <property type="molecule type" value="Genomic_DNA"/>
</dbReference>
<dbReference type="RefSeq" id="WP_000167090.1">
    <property type="nucleotide sequence ID" value="NC_012467.1"/>
</dbReference>
<dbReference type="SMR" id="C1CHW2"/>
<dbReference type="KEGG" id="spp:SPP_0115"/>
<dbReference type="HOGENOM" id="CLU_016316_5_2_9"/>
<dbReference type="UniPathway" id="UPA00074">
    <property type="reaction ID" value="UER00133"/>
</dbReference>
<dbReference type="UniPathway" id="UPA00074">
    <property type="reaction ID" value="UER00135"/>
</dbReference>
<dbReference type="GO" id="GO:0005829">
    <property type="term" value="C:cytosol"/>
    <property type="evidence" value="ECO:0007669"/>
    <property type="project" value="TreeGrafter"/>
</dbReference>
<dbReference type="GO" id="GO:0003937">
    <property type="term" value="F:IMP cyclohydrolase activity"/>
    <property type="evidence" value="ECO:0007669"/>
    <property type="project" value="UniProtKB-UniRule"/>
</dbReference>
<dbReference type="GO" id="GO:0004643">
    <property type="term" value="F:phosphoribosylaminoimidazolecarboxamide formyltransferase activity"/>
    <property type="evidence" value="ECO:0007669"/>
    <property type="project" value="UniProtKB-UniRule"/>
</dbReference>
<dbReference type="GO" id="GO:0006189">
    <property type="term" value="P:'de novo' IMP biosynthetic process"/>
    <property type="evidence" value="ECO:0007669"/>
    <property type="project" value="UniProtKB-UniRule"/>
</dbReference>
<dbReference type="CDD" id="cd01421">
    <property type="entry name" value="IMPCH"/>
    <property type="match status" value="1"/>
</dbReference>
<dbReference type="FunFam" id="3.40.140.20:FF:000001">
    <property type="entry name" value="Bifunctional purine biosynthesis protein PurH"/>
    <property type="match status" value="1"/>
</dbReference>
<dbReference type="FunFam" id="3.40.140.20:FF:000002">
    <property type="entry name" value="Bifunctional purine biosynthesis protein PurH"/>
    <property type="match status" value="1"/>
</dbReference>
<dbReference type="FunFam" id="3.40.50.1380:FF:000001">
    <property type="entry name" value="Bifunctional purine biosynthesis protein PurH"/>
    <property type="match status" value="1"/>
</dbReference>
<dbReference type="Gene3D" id="3.40.140.20">
    <property type="match status" value="2"/>
</dbReference>
<dbReference type="Gene3D" id="3.40.50.1380">
    <property type="entry name" value="Methylglyoxal synthase-like domain"/>
    <property type="match status" value="1"/>
</dbReference>
<dbReference type="HAMAP" id="MF_00139">
    <property type="entry name" value="PurH"/>
    <property type="match status" value="1"/>
</dbReference>
<dbReference type="InterPro" id="IPR024051">
    <property type="entry name" value="AICAR_Tfase_dup_dom_sf"/>
</dbReference>
<dbReference type="InterPro" id="IPR016193">
    <property type="entry name" value="Cytidine_deaminase-like"/>
</dbReference>
<dbReference type="InterPro" id="IPR011607">
    <property type="entry name" value="MGS-like_dom"/>
</dbReference>
<dbReference type="InterPro" id="IPR036914">
    <property type="entry name" value="MGS-like_dom_sf"/>
</dbReference>
<dbReference type="InterPro" id="IPR002695">
    <property type="entry name" value="PurH-like"/>
</dbReference>
<dbReference type="NCBIfam" id="NF002049">
    <property type="entry name" value="PRK00881.1"/>
    <property type="match status" value="1"/>
</dbReference>
<dbReference type="NCBIfam" id="TIGR00355">
    <property type="entry name" value="purH"/>
    <property type="match status" value="1"/>
</dbReference>
<dbReference type="PANTHER" id="PTHR11692:SF0">
    <property type="entry name" value="BIFUNCTIONAL PURINE BIOSYNTHESIS PROTEIN ATIC"/>
    <property type="match status" value="1"/>
</dbReference>
<dbReference type="PANTHER" id="PTHR11692">
    <property type="entry name" value="BIFUNCTIONAL PURINE BIOSYNTHESIS PROTEIN PURH"/>
    <property type="match status" value="1"/>
</dbReference>
<dbReference type="Pfam" id="PF01808">
    <property type="entry name" value="AICARFT_IMPCHas"/>
    <property type="match status" value="1"/>
</dbReference>
<dbReference type="Pfam" id="PF02142">
    <property type="entry name" value="MGS"/>
    <property type="match status" value="1"/>
</dbReference>
<dbReference type="PIRSF" id="PIRSF000414">
    <property type="entry name" value="AICARFT_IMPCHas"/>
    <property type="match status" value="1"/>
</dbReference>
<dbReference type="SMART" id="SM00798">
    <property type="entry name" value="AICARFT_IMPCHas"/>
    <property type="match status" value="1"/>
</dbReference>
<dbReference type="SMART" id="SM00851">
    <property type="entry name" value="MGS"/>
    <property type="match status" value="1"/>
</dbReference>
<dbReference type="SUPFAM" id="SSF53927">
    <property type="entry name" value="Cytidine deaminase-like"/>
    <property type="match status" value="1"/>
</dbReference>
<dbReference type="SUPFAM" id="SSF52335">
    <property type="entry name" value="Methylglyoxal synthase-like"/>
    <property type="match status" value="1"/>
</dbReference>
<dbReference type="PROSITE" id="PS51855">
    <property type="entry name" value="MGS"/>
    <property type="match status" value="1"/>
</dbReference>